<accession>Q6BE23</accession>
<dbReference type="EC" id="5.4.99.-"/>
<dbReference type="EMBL" id="AB116239">
    <property type="protein sequence ID" value="BAD34646.1"/>
    <property type="molecule type" value="mRNA"/>
</dbReference>
<dbReference type="SMR" id="Q6BE23"/>
<dbReference type="GO" id="GO:0005811">
    <property type="term" value="C:lipid droplet"/>
    <property type="evidence" value="ECO:0007669"/>
    <property type="project" value="InterPro"/>
</dbReference>
<dbReference type="GO" id="GO:0031559">
    <property type="term" value="F:oxidosqualene cyclase activity"/>
    <property type="evidence" value="ECO:0007669"/>
    <property type="project" value="UniProtKB-ARBA"/>
</dbReference>
<dbReference type="GO" id="GO:0016104">
    <property type="term" value="P:triterpenoid biosynthetic process"/>
    <property type="evidence" value="ECO:0007669"/>
    <property type="project" value="InterPro"/>
</dbReference>
<dbReference type="CDD" id="cd02892">
    <property type="entry name" value="SQCY_1"/>
    <property type="match status" value="1"/>
</dbReference>
<dbReference type="FunFam" id="1.50.10.20:FF:000002">
    <property type="entry name" value="Terpene cyclase/mutase family member"/>
    <property type="match status" value="1"/>
</dbReference>
<dbReference type="FunFam" id="1.50.10.20:FF:000022">
    <property type="entry name" value="Terpene cyclase/mutase family member"/>
    <property type="match status" value="1"/>
</dbReference>
<dbReference type="Gene3D" id="1.50.10.20">
    <property type="match status" value="3"/>
</dbReference>
<dbReference type="InterPro" id="IPR032696">
    <property type="entry name" value="SQ_cyclase_C"/>
</dbReference>
<dbReference type="InterPro" id="IPR032697">
    <property type="entry name" value="SQ_cyclase_N"/>
</dbReference>
<dbReference type="InterPro" id="IPR018333">
    <property type="entry name" value="Squalene_cyclase"/>
</dbReference>
<dbReference type="InterPro" id="IPR002365">
    <property type="entry name" value="Terpene_synthase_CS"/>
</dbReference>
<dbReference type="InterPro" id="IPR008930">
    <property type="entry name" value="Terpenoid_cyclase/PrenylTrfase"/>
</dbReference>
<dbReference type="NCBIfam" id="TIGR01787">
    <property type="entry name" value="squalene_cyclas"/>
    <property type="match status" value="1"/>
</dbReference>
<dbReference type="PANTHER" id="PTHR11764:SF44">
    <property type="entry name" value="LANOSTEROL SYNTHASE"/>
    <property type="match status" value="1"/>
</dbReference>
<dbReference type="PANTHER" id="PTHR11764">
    <property type="entry name" value="TERPENE CYCLASE/MUTASE FAMILY MEMBER"/>
    <property type="match status" value="1"/>
</dbReference>
<dbReference type="Pfam" id="PF13243">
    <property type="entry name" value="SQHop_cyclase_C"/>
    <property type="match status" value="1"/>
</dbReference>
<dbReference type="Pfam" id="PF13249">
    <property type="entry name" value="SQHop_cyclase_N"/>
    <property type="match status" value="1"/>
</dbReference>
<dbReference type="SFLD" id="SFLDG01016">
    <property type="entry name" value="Prenyltransferase_Like_2"/>
    <property type="match status" value="1"/>
</dbReference>
<dbReference type="SUPFAM" id="SSF48239">
    <property type="entry name" value="Terpenoid cyclases/Protein prenyltransferases"/>
    <property type="match status" value="2"/>
</dbReference>
<dbReference type="PROSITE" id="PS01074">
    <property type="entry name" value="TERPENE_SYNTHASES"/>
    <property type="match status" value="1"/>
</dbReference>
<proteinExistence type="evidence at transcript level"/>
<comment type="similarity">
    <text evidence="2">Belongs to the terpene cyclase/mutase family.</text>
</comment>
<protein>
    <recommendedName>
        <fullName>Probable oxidosqualene cyclase</fullName>
        <ecNumber>5.4.99.-</ecNumber>
    </recommendedName>
</protein>
<keyword id="KW-0413">Isomerase</keyword>
<keyword id="KW-0677">Repeat</keyword>
<feature type="chain" id="PRO_0000412986" description="Probable oxidosqualene cyclase">
    <location>
        <begin position="1"/>
        <end position="759"/>
    </location>
</feature>
<feature type="repeat" description="PFTB 1">
    <location>
        <begin position="146"/>
        <end position="187"/>
    </location>
</feature>
<feature type="repeat" description="PFTB 2">
    <location>
        <begin position="437"/>
        <end position="483"/>
    </location>
</feature>
<feature type="repeat" description="PFTB 3">
    <location>
        <begin position="513"/>
        <end position="554"/>
    </location>
</feature>
<feature type="repeat" description="PFTB 4">
    <location>
        <begin position="590"/>
        <end position="630"/>
    </location>
</feature>
<feature type="repeat" description="PFTB 5">
    <location>
        <begin position="639"/>
        <end position="680"/>
    </location>
</feature>
<feature type="active site" description="Proton donor" evidence="1">
    <location>
        <position position="484"/>
    </location>
</feature>
<sequence length="759" mass="86954">MWTLKFSKGWETSDNAHLGRQFWEFDPNLQPSLEEQARVHNVCNDFYTHRFQAKHSSDLLMRLQLKKANGSEVKLPTQVKLRSEEEMSEEAVETTLRRAIRFYSTMQTQDGFWPGDYAGPLFLLPGLVIGLSVTKALDTVLSRHHQQEMRRYLYNHQNEDGGWGLHIEGNSTMLCTALSYVSLRLLGEEMDGCDGALRQARRWILDRGGATSIPSWGKLWLSVLGVYEWEGNNPLPPEIWLLPYFLPLHPGRMWCHSRMVYLPMSYLYGKRFVGPISPIITSLRQELYTSPYHMIDWNLSRSLCAKEDLYTPHSKIQDMLWDSIHKLGEPLLKKWPLSKLRQKALDFVIKHIHYEDENTHYLCLGPVSKVVNMVCCWDEDPNSEAFTRHISRIKDYLWLAEDGMKMQGYHGSQLWDVAFAIQAIVATDLVEEYGSVLKKAHDFVKNSQVRRNGFGDDDPSDWYRHNSKGGWPFSTPDNAWPVSDCTSEALKVAIMMSQMPPTMVGEPMDIRKLYDAVDLILSLQNSNGGFASYELTRSHPWLETLNPAEIFGDVMIDYQYVECSSAAIERLKAFMKLHPSYRKKEIQACMAKAADFIETIQQPDGSWYGSWGICYTYGTWFGIKGLVACGRTYENSKTLRKATHFLLSKQLKSGGWGESYLSAHNKVYTDLKNGKSHIVNTSWALLALIKAGQAQRDPSPLHQAATVLINSQLDNGDFPQQEIIGVFNKSCTISYSAYRNIFPIWALGEYQLKVLKRQE</sequence>
<organism>
    <name type="scientific">Cucurbita pepo</name>
    <name type="common">Vegetable marrow</name>
    <name type="synonym">Summer squash</name>
    <dbReference type="NCBI Taxonomy" id="3663"/>
    <lineage>
        <taxon>Eukaryota</taxon>
        <taxon>Viridiplantae</taxon>
        <taxon>Streptophyta</taxon>
        <taxon>Embryophyta</taxon>
        <taxon>Tracheophyta</taxon>
        <taxon>Spermatophyta</taxon>
        <taxon>Magnoliopsida</taxon>
        <taxon>eudicotyledons</taxon>
        <taxon>Gunneridae</taxon>
        <taxon>Pentapetalae</taxon>
        <taxon>rosids</taxon>
        <taxon>fabids</taxon>
        <taxon>Cucurbitales</taxon>
        <taxon>Cucurbitaceae</taxon>
        <taxon>Cucurbiteae</taxon>
        <taxon>Cucurbita</taxon>
    </lineage>
</organism>
<name>OXSC_CUCPE</name>
<evidence type="ECO:0000250" key="1">
    <source>
        <dbReference type="UniProtKB" id="P48449"/>
    </source>
</evidence>
<evidence type="ECO:0000305" key="2"/>
<gene>
    <name type="primary">CPR</name>
</gene>
<reference key="1">
    <citation type="journal article" date="2004" name="Tetrahedron">
        <title>Cucurbitadienol synthase, the first committed enzyme for cucurbitacin biosynthesis, is a distinct enzyme from cycloartenol synthase for phytosterol biosynthesis.</title>
        <authorList>
            <person name="Shibuya M."/>
            <person name="Adachi S."/>
            <person name="Ebizuka Y."/>
        </authorList>
    </citation>
    <scope>NUCLEOTIDE SEQUENCE [MRNA]</scope>
</reference>